<name>TRPA_PYRAB</name>
<organism>
    <name type="scientific">Pyrococcus abyssi (strain GE5 / Orsay)</name>
    <dbReference type="NCBI Taxonomy" id="272844"/>
    <lineage>
        <taxon>Archaea</taxon>
        <taxon>Methanobacteriati</taxon>
        <taxon>Methanobacteriota</taxon>
        <taxon>Thermococci</taxon>
        <taxon>Thermococcales</taxon>
        <taxon>Thermococcaceae</taxon>
        <taxon>Pyrococcus</taxon>
    </lineage>
</organism>
<reference key="1">
    <citation type="journal article" date="2003" name="Mol. Microbiol.">
        <title>An integrated analysis of the genome of the hyperthermophilic archaeon Pyrococcus abyssi.</title>
        <authorList>
            <person name="Cohen G.N."/>
            <person name="Barbe V."/>
            <person name="Flament D."/>
            <person name="Galperin M."/>
            <person name="Heilig R."/>
            <person name="Lecompte O."/>
            <person name="Poch O."/>
            <person name="Prieur D."/>
            <person name="Querellou J."/>
            <person name="Ripp R."/>
            <person name="Thierry J.-C."/>
            <person name="Van der Oost J."/>
            <person name="Weissenbach J."/>
            <person name="Zivanovic Y."/>
            <person name="Forterre P."/>
        </authorList>
    </citation>
    <scope>NUCLEOTIDE SEQUENCE [LARGE SCALE GENOMIC DNA]</scope>
    <source>
        <strain>GE5 / Orsay</strain>
    </source>
</reference>
<reference key="2">
    <citation type="journal article" date="2012" name="Curr. Microbiol.">
        <title>Re-annotation of two hyperthermophilic archaea Pyrococcus abyssi GE5 and Pyrococcus furiosus DSM 3638.</title>
        <authorList>
            <person name="Gao J."/>
            <person name="Wang J."/>
        </authorList>
    </citation>
    <scope>GENOME REANNOTATION</scope>
    <source>
        <strain>GE5 / Orsay</strain>
    </source>
</reference>
<proteinExistence type="inferred from homology"/>
<dbReference type="EC" id="4.2.1.20" evidence="1"/>
<dbReference type="EMBL" id="AJ248284">
    <property type="protein sequence ID" value="CAB49380.1"/>
    <property type="molecule type" value="Genomic_DNA"/>
</dbReference>
<dbReference type="EMBL" id="HE613800">
    <property type="protein sequence ID" value="CCE69841.1"/>
    <property type="molecule type" value="Genomic_DNA"/>
</dbReference>
<dbReference type="PIR" id="E75162">
    <property type="entry name" value="E75162"/>
</dbReference>
<dbReference type="RefSeq" id="WP_010867582.1">
    <property type="nucleotide sequence ID" value="NC_000868.1"/>
</dbReference>
<dbReference type="SMR" id="Q9V1G9"/>
<dbReference type="STRING" id="272844.PAB2049"/>
<dbReference type="KEGG" id="pab:PAB2049"/>
<dbReference type="PATRIC" id="fig|272844.11.peg.485"/>
<dbReference type="eggNOG" id="arCOG01086">
    <property type="taxonomic scope" value="Archaea"/>
</dbReference>
<dbReference type="HOGENOM" id="CLU_016734_0_2_2"/>
<dbReference type="OrthoDB" id="25658at2157"/>
<dbReference type="PhylomeDB" id="Q9V1G9"/>
<dbReference type="UniPathway" id="UPA00035">
    <property type="reaction ID" value="UER00044"/>
</dbReference>
<dbReference type="Proteomes" id="UP000000810">
    <property type="component" value="Chromosome"/>
</dbReference>
<dbReference type="Proteomes" id="UP000009139">
    <property type="component" value="Chromosome"/>
</dbReference>
<dbReference type="GO" id="GO:0005829">
    <property type="term" value="C:cytosol"/>
    <property type="evidence" value="ECO:0007669"/>
    <property type="project" value="TreeGrafter"/>
</dbReference>
<dbReference type="GO" id="GO:0004834">
    <property type="term" value="F:tryptophan synthase activity"/>
    <property type="evidence" value="ECO:0007669"/>
    <property type="project" value="UniProtKB-UniRule"/>
</dbReference>
<dbReference type="CDD" id="cd04724">
    <property type="entry name" value="Tryptophan_synthase_alpha"/>
    <property type="match status" value="1"/>
</dbReference>
<dbReference type="FunFam" id="3.20.20.70:FF:000037">
    <property type="entry name" value="Tryptophan synthase alpha chain"/>
    <property type="match status" value="1"/>
</dbReference>
<dbReference type="Gene3D" id="3.20.20.70">
    <property type="entry name" value="Aldolase class I"/>
    <property type="match status" value="1"/>
</dbReference>
<dbReference type="HAMAP" id="MF_00131">
    <property type="entry name" value="Trp_synth_alpha"/>
    <property type="match status" value="1"/>
</dbReference>
<dbReference type="InterPro" id="IPR013785">
    <property type="entry name" value="Aldolase_TIM"/>
</dbReference>
<dbReference type="InterPro" id="IPR011060">
    <property type="entry name" value="RibuloseP-bd_barrel"/>
</dbReference>
<dbReference type="InterPro" id="IPR018204">
    <property type="entry name" value="Trp_synthase_alpha_AS"/>
</dbReference>
<dbReference type="InterPro" id="IPR002028">
    <property type="entry name" value="Trp_synthase_suA"/>
</dbReference>
<dbReference type="NCBIfam" id="TIGR00262">
    <property type="entry name" value="trpA"/>
    <property type="match status" value="1"/>
</dbReference>
<dbReference type="PANTHER" id="PTHR43406:SF1">
    <property type="entry name" value="TRYPTOPHAN SYNTHASE ALPHA CHAIN, CHLOROPLASTIC"/>
    <property type="match status" value="1"/>
</dbReference>
<dbReference type="PANTHER" id="PTHR43406">
    <property type="entry name" value="TRYPTOPHAN SYNTHASE, ALPHA CHAIN"/>
    <property type="match status" value="1"/>
</dbReference>
<dbReference type="Pfam" id="PF00290">
    <property type="entry name" value="Trp_syntA"/>
    <property type="match status" value="1"/>
</dbReference>
<dbReference type="SUPFAM" id="SSF51366">
    <property type="entry name" value="Ribulose-phoshate binding barrel"/>
    <property type="match status" value="1"/>
</dbReference>
<dbReference type="PROSITE" id="PS00167">
    <property type="entry name" value="TRP_SYNTHASE_ALPHA"/>
    <property type="match status" value="1"/>
</dbReference>
<comment type="function">
    <text>The alpha subunit is responsible for the aldol cleavage of indoleglycerol phosphate to indole and glyceraldehyde 3-phosphate.</text>
</comment>
<comment type="catalytic activity">
    <reaction evidence="1">
        <text>(1S,2R)-1-C-(indol-3-yl)glycerol 3-phosphate + L-serine = D-glyceraldehyde 3-phosphate + L-tryptophan + H2O</text>
        <dbReference type="Rhea" id="RHEA:10532"/>
        <dbReference type="ChEBI" id="CHEBI:15377"/>
        <dbReference type="ChEBI" id="CHEBI:33384"/>
        <dbReference type="ChEBI" id="CHEBI:57912"/>
        <dbReference type="ChEBI" id="CHEBI:58866"/>
        <dbReference type="ChEBI" id="CHEBI:59776"/>
        <dbReference type="EC" id="4.2.1.20"/>
    </reaction>
</comment>
<comment type="pathway">
    <text evidence="1">Amino-acid biosynthesis; L-tryptophan biosynthesis; L-tryptophan from chorismate: step 5/5.</text>
</comment>
<comment type="subunit">
    <text evidence="1">Tetramer of two alpha and two beta chains.</text>
</comment>
<comment type="similarity">
    <text evidence="1">Belongs to the TrpA family.</text>
</comment>
<gene>
    <name evidence="1" type="primary">trpA</name>
    <name type="ordered locus">PYRAB04580</name>
    <name type="ORF">PAB2049</name>
</gene>
<sequence>MFRDGSLIPYLTAGDPSAKATLRFLLAIEEYSGAIELGIPFSDPIADGKTIQQSHFRALKGGFKLEHAFNIVREFRKHSDVPIVLMTYYNPVFRVGLREFIGKAKDSGVDGMLIVDLPVMHASEFLEVAREEGIKTVFLAAPNTPDERLKEIDKASTGFVYLISLYGTTGARDKIPETAFNLLKRAKRICKNKVAVGFGVSKREHVEMLLNAGANGVVVGSALINIIAEHGENAEEKLREKVRELAGL</sequence>
<keyword id="KW-0028">Amino-acid biosynthesis</keyword>
<keyword id="KW-0057">Aromatic amino acid biosynthesis</keyword>
<keyword id="KW-0456">Lyase</keyword>
<keyword id="KW-0822">Tryptophan biosynthesis</keyword>
<protein>
    <recommendedName>
        <fullName evidence="1">Tryptophan synthase alpha chain</fullName>
        <ecNumber evidence="1">4.2.1.20</ecNumber>
    </recommendedName>
</protein>
<accession>Q9V1G9</accession>
<accession>G8ZGG2</accession>
<evidence type="ECO:0000255" key="1">
    <source>
        <dbReference type="HAMAP-Rule" id="MF_00131"/>
    </source>
</evidence>
<feature type="chain" id="PRO_0000098896" description="Tryptophan synthase alpha chain">
    <location>
        <begin position="1"/>
        <end position="248"/>
    </location>
</feature>
<feature type="active site" description="Proton acceptor" evidence="1">
    <location>
        <position position="36"/>
    </location>
</feature>
<feature type="active site" description="Proton acceptor" evidence="1">
    <location>
        <position position="47"/>
    </location>
</feature>